<name>HEM3_CITBB</name>
<accession>B5EBG8</accession>
<dbReference type="EC" id="2.5.1.61" evidence="1"/>
<dbReference type="EMBL" id="CP001124">
    <property type="protein sequence ID" value="ACH37437.1"/>
    <property type="molecule type" value="Genomic_DNA"/>
</dbReference>
<dbReference type="RefSeq" id="WP_012528845.1">
    <property type="nucleotide sequence ID" value="NC_011146.1"/>
</dbReference>
<dbReference type="SMR" id="B5EBG8"/>
<dbReference type="STRING" id="404380.Gbem_0408"/>
<dbReference type="KEGG" id="gbm:Gbem_0408"/>
<dbReference type="eggNOG" id="COG0181">
    <property type="taxonomic scope" value="Bacteria"/>
</dbReference>
<dbReference type="HOGENOM" id="CLU_019704_0_2_7"/>
<dbReference type="OrthoDB" id="9810298at2"/>
<dbReference type="UniPathway" id="UPA00251">
    <property type="reaction ID" value="UER00319"/>
</dbReference>
<dbReference type="Proteomes" id="UP000008825">
    <property type="component" value="Chromosome"/>
</dbReference>
<dbReference type="GO" id="GO:0005737">
    <property type="term" value="C:cytoplasm"/>
    <property type="evidence" value="ECO:0007669"/>
    <property type="project" value="TreeGrafter"/>
</dbReference>
<dbReference type="GO" id="GO:0004418">
    <property type="term" value="F:hydroxymethylbilane synthase activity"/>
    <property type="evidence" value="ECO:0007669"/>
    <property type="project" value="UniProtKB-UniRule"/>
</dbReference>
<dbReference type="GO" id="GO:0006782">
    <property type="term" value="P:protoporphyrinogen IX biosynthetic process"/>
    <property type="evidence" value="ECO:0007669"/>
    <property type="project" value="UniProtKB-UniRule"/>
</dbReference>
<dbReference type="CDD" id="cd13646">
    <property type="entry name" value="PBP2_EcHMBS_like"/>
    <property type="match status" value="1"/>
</dbReference>
<dbReference type="FunFam" id="3.30.160.40:FF:000002">
    <property type="entry name" value="Porphobilinogen deaminase"/>
    <property type="match status" value="1"/>
</dbReference>
<dbReference type="FunFam" id="3.40.190.10:FF:000004">
    <property type="entry name" value="Porphobilinogen deaminase"/>
    <property type="match status" value="1"/>
</dbReference>
<dbReference type="FunFam" id="3.40.190.10:FF:000005">
    <property type="entry name" value="Porphobilinogen deaminase"/>
    <property type="match status" value="1"/>
</dbReference>
<dbReference type="Gene3D" id="3.40.190.10">
    <property type="entry name" value="Periplasmic binding protein-like II"/>
    <property type="match status" value="2"/>
</dbReference>
<dbReference type="Gene3D" id="3.30.160.40">
    <property type="entry name" value="Porphobilinogen deaminase, C-terminal domain"/>
    <property type="match status" value="1"/>
</dbReference>
<dbReference type="HAMAP" id="MF_00260">
    <property type="entry name" value="Porphobil_deam"/>
    <property type="match status" value="1"/>
</dbReference>
<dbReference type="InterPro" id="IPR000860">
    <property type="entry name" value="HemC"/>
</dbReference>
<dbReference type="InterPro" id="IPR022419">
    <property type="entry name" value="Porphobilin_deaminase_cofac_BS"/>
</dbReference>
<dbReference type="InterPro" id="IPR022417">
    <property type="entry name" value="Porphobilin_deaminase_N"/>
</dbReference>
<dbReference type="InterPro" id="IPR022418">
    <property type="entry name" value="Porphobilinogen_deaminase_C"/>
</dbReference>
<dbReference type="InterPro" id="IPR036803">
    <property type="entry name" value="Porphobilinogen_deaminase_C_sf"/>
</dbReference>
<dbReference type="NCBIfam" id="TIGR00212">
    <property type="entry name" value="hemC"/>
    <property type="match status" value="1"/>
</dbReference>
<dbReference type="PANTHER" id="PTHR11557">
    <property type="entry name" value="PORPHOBILINOGEN DEAMINASE"/>
    <property type="match status" value="1"/>
</dbReference>
<dbReference type="PANTHER" id="PTHR11557:SF0">
    <property type="entry name" value="PORPHOBILINOGEN DEAMINASE"/>
    <property type="match status" value="1"/>
</dbReference>
<dbReference type="Pfam" id="PF01379">
    <property type="entry name" value="Porphobil_deam"/>
    <property type="match status" value="1"/>
</dbReference>
<dbReference type="Pfam" id="PF03900">
    <property type="entry name" value="Porphobil_deamC"/>
    <property type="match status" value="1"/>
</dbReference>
<dbReference type="PIRSF" id="PIRSF001438">
    <property type="entry name" value="4pyrrol_synth_OHMeBilane_synth"/>
    <property type="match status" value="1"/>
</dbReference>
<dbReference type="PRINTS" id="PR00151">
    <property type="entry name" value="PORPHBDMNASE"/>
</dbReference>
<dbReference type="SUPFAM" id="SSF53850">
    <property type="entry name" value="Periplasmic binding protein-like II"/>
    <property type="match status" value="1"/>
</dbReference>
<dbReference type="SUPFAM" id="SSF54782">
    <property type="entry name" value="Porphobilinogen deaminase (hydroxymethylbilane synthase), C-terminal domain"/>
    <property type="match status" value="1"/>
</dbReference>
<dbReference type="PROSITE" id="PS00533">
    <property type="entry name" value="PORPHOBILINOGEN_DEAM"/>
    <property type="match status" value="1"/>
</dbReference>
<comment type="function">
    <text evidence="1">Tetrapolymerization of the monopyrrole PBG into the hydroxymethylbilane pre-uroporphyrinogen in several discrete steps.</text>
</comment>
<comment type="catalytic activity">
    <reaction evidence="1">
        <text>4 porphobilinogen + H2O = hydroxymethylbilane + 4 NH4(+)</text>
        <dbReference type="Rhea" id="RHEA:13185"/>
        <dbReference type="ChEBI" id="CHEBI:15377"/>
        <dbReference type="ChEBI" id="CHEBI:28938"/>
        <dbReference type="ChEBI" id="CHEBI:57845"/>
        <dbReference type="ChEBI" id="CHEBI:58126"/>
        <dbReference type="EC" id="2.5.1.61"/>
    </reaction>
</comment>
<comment type="cofactor">
    <cofactor evidence="1">
        <name>dipyrromethane</name>
        <dbReference type="ChEBI" id="CHEBI:60342"/>
    </cofactor>
    <text evidence="1">Binds 1 dipyrromethane group covalently.</text>
</comment>
<comment type="pathway">
    <text evidence="1">Porphyrin-containing compound metabolism; protoporphyrin-IX biosynthesis; coproporphyrinogen-III from 5-aminolevulinate: step 2/4.</text>
</comment>
<comment type="subunit">
    <text evidence="1">Monomer.</text>
</comment>
<comment type="miscellaneous">
    <text evidence="1">The porphobilinogen subunits are added to the dipyrromethane group.</text>
</comment>
<comment type="similarity">
    <text evidence="1">Belongs to the HMBS family.</text>
</comment>
<feature type="chain" id="PRO_1000114153" description="Porphobilinogen deaminase">
    <location>
        <begin position="1"/>
        <end position="318"/>
    </location>
</feature>
<feature type="modified residue" description="S-(dipyrrolylmethanemethyl)cysteine" evidence="1">
    <location>
        <position position="241"/>
    </location>
</feature>
<organism>
    <name type="scientific">Citrifermentans bemidjiense (strain ATCC BAA-1014 / DSM 16622 / JCM 12645 / Bem)</name>
    <name type="common">Geobacter bemidjiensis</name>
    <dbReference type="NCBI Taxonomy" id="404380"/>
    <lineage>
        <taxon>Bacteria</taxon>
        <taxon>Pseudomonadati</taxon>
        <taxon>Thermodesulfobacteriota</taxon>
        <taxon>Desulfuromonadia</taxon>
        <taxon>Geobacterales</taxon>
        <taxon>Geobacteraceae</taxon>
        <taxon>Citrifermentans</taxon>
    </lineage>
</organism>
<keyword id="KW-0627">Porphyrin biosynthesis</keyword>
<keyword id="KW-1185">Reference proteome</keyword>
<keyword id="KW-0808">Transferase</keyword>
<gene>
    <name evidence="1" type="primary">hemC</name>
    <name type="ordered locus">Gbem_0408</name>
</gene>
<evidence type="ECO:0000255" key="1">
    <source>
        <dbReference type="HAMAP-Rule" id="MF_00260"/>
    </source>
</evidence>
<reference key="1">
    <citation type="submission" date="2008-07" db="EMBL/GenBank/DDBJ databases">
        <title>Complete sequence of Geobacter bemidjiensis BEM.</title>
        <authorList>
            <consortium name="US DOE Joint Genome Institute"/>
            <person name="Lucas S."/>
            <person name="Copeland A."/>
            <person name="Lapidus A."/>
            <person name="Glavina del Rio T."/>
            <person name="Dalin E."/>
            <person name="Tice H."/>
            <person name="Bruce D."/>
            <person name="Goodwin L."/>
            <person name="Pitluck S."/>
            <person name="Kiss H."/>
            <person name="Brettin T."/>
            <person name="Detter J.C."/>
            <person name="Han C."/>
            <person name="Kuske C.R."/>
            <person name="Schmutz J."/>
            <person name="Larimer F."/>
            <person name="Land M."/>
            <person name="Hauser L."/>
            <person name="Kyrpides N."/>
            <person name="Lykidis A."/>
            <person name="Lovley D."/>
            <person name="Richardson P."/>
        </authorList>
    </citation>
    <scope>NUCLEOTIDE SEQUENCE [LARGE SCALE GENOMIC DNA]</scope>
    <source>
        <strain>ATCC BAA-1014 / DSM 16622 / JCM 12645 / Bem</strain>
    </source>
</reference>
<sequence length="318" mass="34519">MALKELRIGTRASQLALWQANWVKSELEKRYPDMTVTLTKIKTIGDKILDVPLAQVGGKGLFVKEIEEAMLRGEIDIAVHSMKDVPTEFPEGLGLYCITEREDPRDAVISNGVKFADLPQGARIGTSALRRQAQLLKVRPDLEMVIIRGNVQTRMDKLKTEGLDAVILAAAGLNRLGFADQITEMLPTDLSLPAIGQGALGIECNLSNQDVKDAISFFNSPDTSRAVRAERALLWRCEGGCQVPIAAFGEVTGDQLKLTGFIASVDGKVSVKGVVTGPADDCEKLGVKLAEQLLSEGGHAILAEVYQREVSREKEIPV</sequence>
<protein>
    <recommendedName>
        <fullName evidence="1">Porphobilinogen deaminase</fullName>
        <shortName evidence="1">PBG</shortName>
        <ecNumber evidence="1">2.5.1.61</ecNumber>
    </recommendedName>
    <alternativeName>
        <fullName evidence="1">Hydroxymethylbilane synthase</fullName>
        <shortName evidence="1">HMBS</shortName>
    </alternativeName>
    <alternativeName>
        <fullName evidence="1">Pre-uroporphyrinogen synthase</fullName>
    </alternativeName>
</protein>
<proteinExistence type="inferred from homology"/>